<accession>Q8TC27</accession>
<accession>Q8TC42</accession>
<comment type="function">
    <text evidence="1">May play a role in sperm development and fertilization This is a non-catalytic metalloprotease-like protein.</text>
</comment>
<comment type="interaction">
    <interactant intactId="EBI-18273040">
        <id>Q8TC27</id>
    </interactant>
    <interactant intactId="EBI-10215641">
        <id>P56748</id>
        <label>CLDN8</label>
    </interactant>
    <organismsDiffer>false</organismsDiffer>
    <experiments>3</experiments>
</comment>
<comment type="subcellular location">
    <subcellularLocation>
        <location evidence="11">Membrane</location>
        <topology evidence="11">Single-pass type I membrane protein</topology>
    </subcellularLocation>
</comment>
<comment type="tissue specificity">
    <text evidence="7">Testis specific.</text>
</comment>
<protein>
    <recommendedName>
        <fullName>Disintegrin and metalloproteinase domain-containing protein 32</fullName>
        <shortName>ADAM 32</shortName>
    </recommendedName>
</protein>
<evidence type="ECO:0000250" key="1"/>
<evidence type="ECO:0000255" key="2"/>
<evidence type="ECO:0000255" key="3">
    <source>
        <dbReference type="PROSITE-ProRule" id="PRU00068"/>
    </source>
</evidence>
<evidence type="ECO:0000255" key="4">
    <source>
        <dbReference type="PROSITE-ProRule" id="PRU00076"/>
    </source>
</evidence>
<evidence type="ECO:0000255" key="5">
    <source>
        <dbReference type="PROSITE-ProRule" id="PRU00276"/>
    </source>
</evidence>
<evidence type="ECO:0000256" key="6">
    <source>
        <dbReference type="SAM" id="MobiDB-lite"/>
    </source>
</evidence>
<evidence type="ECO:0000269" key="7">
    <source>
    </source>
</evidence>
<evidence type="ECO:0000269" key="8">
    <source>
    </source>
</evidence>
<evidence type="ECO:0000269" key="9">
    <source>
    </source>
</evidence>
<evidence type="ECO:0000269" key="10">
    <source>
    </source>
</evidence>
<evidence type="ECO:0000305" key="11"/>
<evidence type="ECO:0007744" key="12">
    <source>
    </source>
</evidence>
<evidence type="ECO:0007744" key="13">
    <source>
    </source>
</evidence>
<keyword id="KW-0903">Direct protein sequencing</keyword>
<keyword id="KW-1015">Disulfide bond</keyword>
<keyword id="KW-0245">EGF-like domain</keyword>
<keyword id="KW-0325">Glycoprotein</keyword>
<keyword id="KW-0472">Membrane</keyword>
<keyword id="KW-0597">Phosphoprotein</keyword>
<keyword id="KW-1267">Proteomics identification</keyword>
<keyword id="KW-1185">Reference proteome</keyword>
<keyword id="KW-0732">Signal</keyword>
<keyword id="KW-0812">Transmembrane</keyword>
<keyword id="KW-1133">Transmembrane helix</keyword>
<proteinExistence type="evidence at protein level"/>
<name>ADA32_HUMAN</name>
<feature type="signal peptide" evidence="9">
    <location>
        <begin position="1"/>
        <end position="16"/>
    </location>
</feature>
<feature type="propeptide" id="PRO_0000029138" evidence="2">
    <location>
        <begin position="17"/>
        <end position="174"/>
    </location>
</feature>
<feature type="chain" id="PRO_0000029139" description="Disintegrin and metalloproteinase domain-containing protein 32">
    <location>
        <begin position="175"/>
        <end position="787"/>
    </location>
</feature>
<feature type="topological domain" description="Extracellular" evidence="2">
    <location>
        <begin position="175"/>
        <end position="682"/>
    </location>
</feature>
<feature type="transmembrane region" description="Helical" evidence="2">
    <location>
        <begin position="683"/>
        <end position="703"/>
    </location>
</feature>
<feature type="topological domain" description="Cytoplasmic" evidence="2">
    <location>
        <begin position="704"/>
        <end position="787"/>
    </location>
</feature>
<feature type="domain" description="Peptidase M12B" evidence="5">
    <location>
        <begin position="186"/>
        <end position="383"/>
    </location>
</feature>
<feature type="domain" description="Disintegrin" evidence="3">
    <location>
        <begin position="391"/>
        <end position="479"/>
    </location>
</feature>
<feature type="domain" description="EGF-like" evidence="4">
    <location>
        <begin position="622"/>
        <end position="654"/>
    </location>
</feature>
<feature type="region of interest" description="Disordered" evidence="6">
    <location>
        <begin position="715"/>
        <end position="787"/>
    </location>
</feature>
<feature type="compositionally biased region" description="Polar residues" evidence="6">
    <location>
        <begin position="728"/>
        <end position="749"/>
    </location>
</feature>
<feature type="compositionally biased region" description="Low complexity" evidence="6">
    <location>
        <begin position="771"/>
        <end position="787"/>
    </location>
</feature>
<feature type="modified residue" description="Phosphoserine" evidence="12 13">
    <location>
        <position position="17"/>
    </location>
</feature>
<feature type="glycosylation site" description="N-linked (GlcNAc...) asparagine" evidence="2">
    <location>
        <position position="39"/>
    </location>
</feature>
<feature type="glycosylation site" description="N-linked (GlcNAc...) asparagine" evidence="2">
    <location>
        <position position="125"/>
    </location>
</feature>
<feature type="glycosylation site" description="N-linked (GlcNAc...) asparagine" evidence="2">
    <location>
        <position position="465"/>
    </location>
</feature>
<feature type="glycosylation site" description="N-linked (GlcNAc...) asparagine" evidence="2">
    <location>
        <position position="598"/>
    </location>
</feature>
<feature type="disulfide bond" evidence="1">
    <location>
        <begin position="295"/>
        <end position="378"/>
    </location>
</feature>
<feature type="disulfide bond" evidence="1">
    <location>
        <begin position="337"/>
        <end position="362"/>
    </location>
</feature>
<feature type="disulfide bond" evidence="1">
    <location>
        <begin position="339"/>
        <end position="344"/>
    </location>
</feature>
<feature type="disulfide bond" evidence="1">
    <location>
        <begin position="450"/>
        <end position="471"/>
    </location>
</feature>
<feature type="disulfide bond" evidence="1">
    <location>
        <begin position="626"/>
        <end position="636"/>
    </location>
</feature>
<feature type="disulfide bond" evidence="1">
    <location>
        <begin position="630"/>
        <end position="642"/>
    </location>
</feature>
<feature type="disulfide bond" evidence="1">
    <location>
        <begin position="644"/>
        <end position="653"/>
    </location>
</feature>
<feature type="sequence variant" id="VAR_055241" description="In dbSNP:rs17856744." evidence="10">
    <original>Q</original>
    <variation>R</variation>
    <location>
        <position position="98"/>
    </location>
</feature>
<feature type="sequence variant" id="VAR_055242" description="In dbSNP:rs17852343." evidence="10">
    <original>S</original>
    <variation>G</variation>
    <location>
        <position position="160"/>
    </location>
</feature>
<feature type="sequence variant" id="VAR_055243" description="In dbSNP:rs9643859.">
    <original>L</original>
    <variation>V</variation>
    <location>
        <position position="327"/>
    </location>
</feature>
<feature type="sequence variant" id="VAR_051591" description="In dbSNP:rs7845771." evidence="8 10">
    <original>T</original>
    <variation>S</variation>
    <location>
        <position position="467"/>
    </location>
</feature>
<feature type="sequence variant" id="VAR_055244" description="In dbSNP:rs13277386.">
    <original>K</original>
    <variation>N</variation>
    <location>
        <position position="658"/>
    </location>
</feature>
<feature type="sequence variant" id="VAR_061739" description="In dbSNP:rs28705715.">
    <original>D</original>
    <variation>E</variation>
    <location>
        <position position="778"/>
    </location>
</feature>
<dbReference type="EMBL" id="AY358739">
    <property type="protein sequence ID" value="AAQ89099.1"/>
    <property type="molecule type" value="mRNA"/>
</dbReference>
<dbReference type="EMBL" id="AC105091">
    <property type="status" value="NOT_ANNOTATED_CDS"/>
    <property type="molecule type" value="Genomic_DNA"/>
</dbReference>
<dbReference type="EMBL" id="AC105185">
    <property type="status" value="NOT_ANNOTATED_CDS"/>
    <property type="molecule type" value="Genomic_DNA"/>
</dbReference>
<dbReference type="EMBL" id="BC026085">
    <property type="protein sequence ID" value="AAH26085.1"/>
    <property type="molecule type" value="mRNA"/>
</dbReference>
<dbReference type="EMBL" id="BC026169">
    <property type="protein sequence ID" value="AAH26169.1"/>
    <property type="molecule type" value="mRNA"/>
</dbReference>
<dbReference type="EMBL" id="BC028702">
    <property type="protein sequence ID" value="AAH28702.1"/>
    <property type="molecule type" value="mRNA"/>
</dbReference>
<dbReference type="EMBL" id="BC030014">
    <property type="protein sequence ID" value="AAH30014.1"/>
    <property type="molecule type" value="mRNA"/>
</dbReference>
<dbReference type="EMBL" id="BC030698">
    <property type="protein sequence ID" value="AAH30698.1"/>
    <property type="molecule type" value="mRNA"/>
</dbReference>
<dbReference type="EMBL" id="BC034975">
    <property type="protein sequence ID" value="AAH34975.1"/>
    <property type="molecule type" value="mRNA"/>
</dbReference>
<dbReference type="CCDS" id="CCDS47846.1"/>
<dbReference type="RefSeq" id="NP_001300923.1">
    <property type="nucleotide sequence ID" value="NM_001313994.1"/>
</dbReference>
<dbReference type="RefSeq" id="NP_659441.3">
    <property type="nucleotide sequence ID" value="NM_145004.6"/>
</dbReference>
<dbReference type="SMR" id="Q8TC27"/>
<dbReference type="BioGRID" id="128451">
    <property type="interactions" value="28"/>
</dbReference>
<dbReference type="FunCoup" id="Q8TC27">
    <property type="interactions" value="64"/>
</dbReference>
<dbReference type="IntAct" id="Q8TC27">
    <property type="interactions" value="25"/>
</dbReference>
<dbReference type="STRING" id="9606.ENSP00000369238"/>
<dbReference type="MEROPS" id="M12.960"/>
<dbReference type="GlyCosmos" id="Q8TC27">
    <property type="glycosylation" value="4 sites, No reported glycans"/>
</dbReference>
<dbReference type="GlyGen" id="Q8TC27">
    <property type="glycosylation" value="4 sites"/>
</dbReference>
<dbReference type="iPTMnet" id="Q8TC27"/>
<dbReference type="PhosphoSitePlus" id="Q8TC27"/>
<dbReference type="BioMuta" id="ADAM32"/>
<dbReference type="DMDM" id="296434389"/>
<dbReference type="MassIVE" id="Q8TC27"/>
<dbReference type="PaxDb" id="9606-ENSP00000369238"/>
<dbReference type="PeptideAtlas" id="Q8TC27"/>
<dbReference type="ProteomicsDB" id="74084"/>
<dbReference type="Antibodypedia" id="23785">
    <property type="antibodies" value="155 antibodies from 25 providers"/>
</dbReference>
<dbReference type="DNASU" id="203102"/>
<dbReference type="Ensembl" id="ENST00000379907.9">
    <property type="protein sequence ID" value="ENSP00000369238.4"/>
    <property type="gene ID" value="ENSG00000197140.15"/>
</dbReference>
<dbReference type="Ensembl" id="ENST00000615420.4">
    <property type="protein sequence ID" value="ENSP00000484817.1"/>
    <property type="gene ID" value="ENSG00000275594.4"/>
</dbReference>
<dbReference type="GeneID" id="203102"/>
<dbReference type="KEGG" id="hsa:203102"/>
<dbReference type="MANE-Select" id="ENST00000379907.9">
    <property type="protein sequence ID" value="ENSP00000369238.4"/>
    <property type="RefSeq nucleotide sequence ID" value="NM_145004.7"/>
    <property type="RefSeq protein sequence ID" value="NP_659441.4"/>
</dbReference>
<dbReference type="UCSC" id="uc003xmt.5">
    <property type="organism name" value="human"/>
</dbReference>
<dbReference type="AGR" id="HGNC:15479"/>
<dbReference type="CTD" id="203102"/>
<dbReference type="DisGeNET" id="203102"/>
<dbReference type="GeneCards" id="ADAM32"/>
<dbReference type="HGNC" id="HGNC:15479">
    <property type="gene designation" value="ADAM32"/>
</dbReference>
<dbReference type="HPA" id="ENSG00000197140">
    <property type="expression patterns" value="Tissue enriched (testis)"/>
</dbReference>
<dbReference type="MIM" id="618602">
    <property type="type" value="gene"/>
</dbReference>
<dbReference type="neXtProt" id="NX_Q8TC27"/>
<dbReference type="OpenTargets" id="ENSG00000197140"/>
<dbReference type="PharmGKB" id="PA134932610"/>
<dbReference type="VEuPathDB" id="HostDB:ENSG00000197140"/>
<dbReference type="eggNOG" id="KOG3607">
    <property type="taxonomic scope" value="Eukaryota"/>
</dbReference>
<dbReference type="GeneTree" id="ENSGT00940000161015"/>
<dbReference type="HOGENOM" id="CLU_012714_4_3_1"/>
<dbReference type="InParanoid" id="Q8TC27"/>
<dbReference type="OMA" id="GWQCLCP"/>
<dbReference type="OrthoDB" id="5951731at2759"/>
<dbReference type="PAN-GO" id="Q8TC27">
    <property type="GO annotations" value="2 GO annotations based on evolutionary models"/>
</dbReference>
<dbReference type="PhylomeDB" id="Q8TC27"/>
<dbReference type="TreeFam" id="TF314733"/>
<dbReference type="PathwayCommons" id="Q8TC27"/>
<dbReference type="SignaLink" id="Q8TC27"/>
<dbReference type="BioGRID-ORCS" id="203102">
    <property type="hits" value="18 hits in 1147 CRISPR screens"/>
</dbReference>
<dbReference type="GenomeRNAi" id="203102"/>
<dbReference type="Pharos" id="Q8TC27">
    <property type="development level" value="Tdark"/>
</dbReference>
<dbReference type="PRO" id="PR:Q8TC27"/>
<dbReference type="Proteomes" id="UP000005640">
    <property type="component" value="Chromosome 8"/>
</dbReference>
<dbReference type="RNAct" id="Q8TC27">
    <property type="molecule type" value="protein"/>
</dbReference>
<dbReference type="Bgee" id="ENSG00000197140">
    <property type="expression patterns" value="Expressed in left testis and 98 other cell types or tissues"/>
</dbReference>
<dbReference type="ExpressionAtlas" id="Q8TC27">
    <property type="expression patterns" value="baseline and differential"/>
</dbReference>
<dbReference type="GO" id="GO:0009986">
    <property type="term" value="C:cell surface"/>
    <property type="evidence" value="ECO:0007669"/>
    <property type="project" value="Ensembl"/>
</dbReference>
<dbReference type="GO" id="GO:0005886">
    <property type="term" value="C:plasma membrane"/>
    <property type="evidence" value="ECO:0000318"/>
    <property type="project" value="GO_Central"/>
</dbReference>
<dbReference type="GO" id="GO:0004222">
    <property type="term" value="F:metalloendopeptidase activity"/>
    <property type="evidence" value="ECO:0000318"/>
    <property type="project" value="GO_Central"/>
</dbReference>
<dbReference type="GO" id="GO:0007339">
    <property type="term" value="P:binding of sperm to zona pellucida"/>
    <property type="evidence" value="ECO:0000318"/>
    <property type="project" value="GO_Central"/>
</dbReference>
<dbReference type="GO" id="GO:0007155">
    <property type="term" value="P:cell adhesion"/>
    <property type="evidence" value="ECO:0000318"/>
    <property type="project" value="GO_Central"/>
</dbReference>
<dbReference type="GO" id="GO:0008584">
    <property type="term" value="P:male gonad development"/>
    <property type="evidence" value="ECO:0000318"/>
    <property type="project" value="GO_Central"/>
</dbReference>
<dbReference type="GO" id="GO:0006508">
    <property type="term" value="P:proteolysis"/>
    <property type="evidence" value="ECO:0000318"/>
    <property type="project" value="GO_Central"/>
</dbReference>
<dbReference type="CDD" id="cd04269">
    <property type="entry name" value="ZnMc_adamalysin_II_like"/>
    <property type="match status" value="1"/>
</dbReference>
<dbReference type="FunFam" id="4.10.70.10:FF:000003">
    <property type="entry name" value="Disintegrin and metalloproteinase domain-containing protein 17"/>
    <property type="match status" value="1"/>
</dbReference>
<dbReference type="Gene3D" id="3.40.390.10">
    <property type="entry name" value="Collagenase (Catalytic Domain)"/>
    <property type="match status" value="1"/>
</dbReference>
<dbReference type="Gene3D" id="4.10.70.10">
    <property type="entry name" value="Disintegrin domain"/>
    <property type="match status" value="1"/>
</dbReference>
<dbReference type="Gene3D" id="2.60.120.260">
    <property type="entry name" value="Galactose-binding domain-like"/>
    <property type="match status" value="1"/>
</dbReference>
<dbReference type="InterPro" id="IPR006586">
    <property type="entry name" value="ADAM_Cys-rich"/>
</dbReference>
<dbReference type="InterPro" id="IPR018358">
    <property type="entry name" value="Disintegrin_CS"/>
</dbReference>
<dbReference type="InterPro" id="IPR001762">
    <property type="entry name" value="Disintegrin_dom"/>
</dbReference>
<dbReference type="InterPro" id="IPR036436">
    <property type="entry name" value="Disintegrin_dom_sf"/>
</dbReference>
<dbReference type="InterPro" id="IPR000742">
    <property type="entry name" value="EGF-like_dom"/>
</dbReference>
<dbReference type="InterPro" id="IPR024079">
    <property type="entry name" value="MetalloPept_cat_dom_sf"/>
</dbReference>
<dbReference type="InterPro" id="IPR001590">
    <property type="entry name" value="Peptidase_M12B"/>
</dbReference>
<dbReference type="InterPro" id="IPR002870">
    <property type="entry name" value="Peptidase_M12B_N"/>
</dbReference>
<dbReference type="InterPro" id="IPR034027">
    <property type="entry name" value="Reprolysin_adamalysin"/>
</dbReference>
<dbReference type="PANTHER" id="PTHR11905">
    <property type="entry name" value="ADAM A DISINTEGRIN AND METALLOPROTEASE DOMAIN"/>
    <property type="match status" value="1"/>
</dbReference>
<dbReference type="PANTHER" id="PTHR11905:SF24">
    <property type="entry name" value="DISINTEGRIN AND METALLOPROTEINASE DOMAIN-CONTAINING PROTEIN 32"/>
    <property type="match status" value="1"/>
</dbReference>
<dbReference type="Pfam" id="PF08516">
    <property type="entry name" value="ADAM_CR"/>
    <property type="match status" value="1"/>
</dbReference>
<dbReference type="Pfam" id="PF00200">
    <property type="entry name" value="Disintegrin"/>
    <property type="match status" value="1"/>
</dbReference>
<dbReference type="Pfam" id="PF23106">
    <property type="entry name" value="EGF_Teneurin"/>
    <property type="match status" value="1"/>
</dbReference>
<dbReference type="Pfam" id="PF01562">
    <property type="entry name" value="Pep_M12B_propep"/>
    <property type="match status" value="1"/>
</dbReference>
<dbReference type="Pfam" id="PF01421">
    <property type="entry name" value="Reprolysin"/>
    <property type="match status" value="1"/>
</dbReference>
<dbReference type="SMART" id="SM00608">
    <property type="entry name" value="ACR"/>
    <property type="match status" value="1"/>
</dbReference>
<dbReference type="SMART" id="SM00050">
    <property type="entry name" value="DISIN"/>
    <property type="match status" value="1"/>
</dbReference>
<dbReference type="SUPFAM" id="SSF57552">
    <property type="entry name" value="Blood coagulation inhibitor (disintegrin)"/>
    <property type="match status" value="1"/>
</dbReference>
<dbReference type="SUPFAM" id="SSF55486">
    <property type="entry name" value="Metalloproteases ('zincins'), catalytic domain"/>
    <property type="match status" value="1"/>
</dbReference>
<dbReference type="PROSITE" id="PS50215">
    <property type="entry name" value="ADAM_MEPRO"/>
    <property type="match status" value="1"/>
</dbReference>
<dbReference type="PROSITE" id="PS00427">
    <property type="entry name" value="DISINTEGRIN_1"/>
    <property type="match status" value="1"/>
</dbReference>
<dbReference type="PROSITE" id="PS50214">
    <property type="entry name" value="DISINTEGRIN_2"/>
    <property type="match status" value="1"/>
</dbReference>
<dbReference type="PROSITE" id="PS01186">
    <property type="entry name" value="EGF_2"/>
    <property type="match status" value="1"/>
</dbReference>
<dbReference type="PROSITE" id="PS50026">
    <property type="entry name" value="EGF_3"/>
    <property type="match status" value="1"/>
</dbReference>
<sequence>MFRLWLLLAGLCGLLASRPGFQNSLLQIVIPEKIQTNTNDSSEIEYEQISYIIPIDEKLYTVHLKQRYFLADNFMIYLYNQGSMNTYSSDIQTQCYYQGNIEGYPDSMVTLSTCSGLRGILQFENVSYGIEPLESAVEFQHVLYKLKNEDNDIAIFIDRSLKEQPMDDNIFISEKSEPAVPDLFPLYLEMHIVVDKTLYDYWGSDSMIVTNKVIEIVGLANSMFTQFKVTIVLSSLELWSDENKISTVGEADELLQKFLEWKQSYLNLRPHDIAYLLIYMDYPRYLGAVFPGTMCITRYSAGVALYPKEITLEAFAVIVTQMLALSLGISYDDPKKCQCSESTCIMNPEVVQSNGVKTFSSCSLRSFQNFISNVGVKCLQNKPQMQKKSPKPVCGNGRLEGNEICDCGTEAQCGPASCCDFRTCVLKDGAKCYKGLCCKDCQILQSGVECRPKAHPECDIAENCNGTSPECGPDITLINGLSCKNNKFICYDGDCHDLDARCESVFGKGSRNAPFACYEEIQSQSDRFGNCGRDRNNKYVFCGWRNLICGRLVCTYPTRKPFHQENGDVIYAFVRDSVCITVDYKLPRTVPDPLAVKNGSQCDIGRVCVNRECVESRIIKASAHVCSQQCSGHGVCDSRNKCHCSPGYKPPNCQIRSKGFSIFPEEDMGSIMERASGKTENTWLLGFLIALPILIVTTAIVLARKQLKKWFAKEEEFPSSESKSEGSTQTYASQSSSEGSTQTYASQTRSESSSQADTSKSKSEDSAEAYTSRSKSQDSTQTQSSSN</sequence>
<gene>
    <name type="primary">ADAM32</name>
    <name type="ORF">UNQ5982/PRO21340</name>
</gene>
<organism>
    <name type="scientific">Homo sapiens</name>
    <name type="common">Human</name>
    <dbReference type="NCBI Taxonomy" id="9606"/>
    <lineage>
        <taxon>Eukaryota</taxon>
        <taxon>Metazoa</taxon>
        <taxon>Chordata</taxon>
        <taxon>Craniata</taxon>
        <taxon>Vertebrata</taxon>
        <taxon>Euteleostomi</taxon>
        <taxon>Mammalia</taxon>
        <taxon>Eutheria</taxon>
        <taxon>Euarchontoglires</taxon>
        <taxon>Primates</taxon>
        <taxon>Haplorrhini</taxon>
        <taxon>Catarrhini</taxon>
        <taxon>Hominidae</taxon>
        <taxon>Homo</taxon>
    </lineage>
</organism>
<reference key="1">
    <citation type="journal article" date="2003" name="Genome Res.">
        <title>The secreted protein discovery initiative (SPDI), a large-scale effort to identify novel human secreted and transmembrane proteins: a bioinformatics assessment.</title>
        <authorList>
            <person name="Clark H.F."/>
            <person name="Gurney A.L."/>
            <person name="Abaya E."/>
            <person name="Baker K."/>
            <person name="Baldwin D.T."/>
            <person name="Brush J."/>
            <person name="Chen J."/>
            <person name="Chow B."/>
            <person name="Chui C."/>
            <person name="Crowley C."/>
            <person name="Currell B."/>
            <person name="Deuel B."/>
            <person name="Dowd P."/>
            <person name="Eaton D."/>
            <person name="Foster J.S."/>
            <person name="Grimaldi C."/>
            <person name="Gu Q."/>
            <person name="Hass P.E."/>
            <person name="Heldens S."/>
            <person name="Huang A."/>
            <person name="Kim H.S."/>
            <person name="Klimowski L."/>
            <person name="Jin Y."/>
            <person name="Johnson S."/>
            <person name="Lee J."/>
            <person name="Lewis L."/>
            <person name="Liao D."/>
            <person name="Mark M.R."/>
            <person name="Robbie E."/>
            <person name="Sanchez C."/>
            <person name="Schoenfeld J."/>
            <person name="Seshagiri S."/>
            <person name="Simmons L."/>
            <person name="Singh J."/>
            <person name="Smith V."/>
            <person name="Stinson J."/>
            <person name="Vagts A."/>
            <person name="Vandlen R.L."/>
            <person name="Watanabe C."/>
            <person name="Wieand D."/>
            <person name="Woods K."/>
            <person name="Xie M.-H."/>
            <person name="Yansura D.G."/>
            <person name="Yi S."/>
            <person name="Yu G."/>
            <person name="Yuan J."/>
            <person name="Zhang M."/>
            <person name="Zhang Z."/>
            <person name="Goddard A.D."/>
            <person name="Wood W.I."/>
            <person name="Godowski P.J."/>
            <person name="Gray A.M."/>
        </authorList>
    </citation>
    <scope>NUCLEOTIDE SEQUENCE [LARGE SCALE MRNA]</scope>
    <scope>VARIANT SER-467</scope>
</reference>
<reference key="2">
    <citation type="journal article" date="2006" name="Nature">
        <title>DNA sequence and analysis of human chromosome 8.</title>
        <authorList>
            <person name="Nusbaum C."/>
            <person name="Mikkelsen T.S."/>
            <person name="Zody M.C."/>
            <person name="Asakawa S."/>
            <person name="Taudien S."/>
            <person name="Garber M."/>
            <person name="Kodira C.D."/>
            <person name="Schueler M.G."/>
            <person name="Shimizu A."/>
            <person name="Whittaker C.A."/>
            <person name="Chang J.L."/>
            <person name="Cuomo C.A."/>
            <person name="Dewar K."/>
            <person name="FitzGerald M.G."/>
            <person name="Yang X."/>
            <person name="Allen N.R."/>
            <person name="Anderson S."/>
            <person name="Asakawa T."/>
            <person name="Blechschmidt K."/>
            <person name="Bloom T."/>
            <person name="Borowsky M.L."/>
            <person name="Butler J."/>
            <person name="Cook A."/>
            <person name="Corum B."/>
            <person name="DeArellano K."/>
            <person name="DeCaprio D."/>
            <person name="Dooley K.T."/>
            <person name="Dorris L. III"/>
            <person name="Engels R."/>
            <person name="Gloeckner G."/>
            <person name="Hafez N."/>
            <person name="Hagopian D.S."/>
            <person name="Hall J.L."/>
            <person name="Ishikawa S.K."/>
            <person name="Jaffe D.B."/>
            <person name="Kamat A."/>
            <person name="Kudoh J."/>
            <person name="Lehmann R."/>
            <person name="Lokitsang T."/>
            <person name="Macdonald P."/>
            <person name="Major J.E."/>
            <person name="Matthews C.D."/>
            <person name="Mauceli E."/>
            <person name="Menzel U."/>
            <person name="Mihalev A.H."/>
            <person name="Minoshima S."/>
            <person name="Murayama Y."/>
            <person name="Naylor J.W."/>
            <person name="Nicol R."/>
            <person name="Nguyen C."/>
            <person name="O'Leary S.B."/>
            <person name="O'Neill K."/>
            <person name="Parker S.C.J."/>
            <person name="Polley A."/>
            <person name="Raymond C.K."/>
            <person name="Reichwald K."/>
            <person name="Rodriguez J."/>
            <person name="Sasaki T."/>
            <person name="Schilhabel M."/>
            <person name="Siddiqui R."/>
            <person name="Smith C.L."/>
            <person name="Sneddon T.P."/>
            <person name="Talamas J.A."/>
            <person name="Tenzin P."/>
            <person name="Topham K."/>
            <person name="Venkataraman V."/>
            <person name="Wen G."/>
            <person name="Yamazaki S."/>
            <person name="Young S.K."/>
            <person name="Zeng Q."/>
            <person name="Zimmer A.R."/>
            <person name="Rosenthal A."/>
            <person name="Birren B.W."/>
            <person name="Platzer M."/>
            <person name="Shimizu N."/>
            <person name="Lander E.S."/>
        </authorList>
    </citation>
    <scope>NUCLEOTIDE SEQUENCE [LARGE SCALE GENOMIC DNA]</scope>
</reference>
<reference key="3">
    <citation type="journal article" date="2004" name="Genome Res.">
        <title>The status, quality, and expansion of the NIH full-length cDNA project: the Mammalian Gene Collection (MGC).</title>
        <authorList>
            <consortium name="The MGC Project Team"/>
        </authorList>
    </citation>
    <scope>NUCLEOTIDE SEQUENCE [LARGE SCALE MRNA]</scope>
    <scope>VARIANTS ARG-98; GLY-160 AND SER-467</scope>
    <source>
        <tissue>Testis</tissue>
    </source>
</reference>
<reference key="4">
    <citation type="journal article" date="2004" name="Protein Sci.">
        <title>Signal peptide prediction based on analysis of experimentally verified cleavage sites.</title>
        <authorList>
            <person name="Zhang Z."/>
            <person name="Henzel W.J."/>
        </authorList>
    </citation>
    <scope>PROTEIN SEQUENCE OF 17-31</scope>
</reference>
<reference key="5">
    <citation type="journal article" date="2003" name="Gene">
        <title>Identification and characterization of ADAM32 with testis-predominant gene expression.</title>
        <authorList>
            <person name="Choi I."/>
            <person name="Woo J.-M."/>
            <person name="Hong S."/>
            <person name="Jung Y.-K."/>
            <person name="Kim D.H."/>
            <person name="Cho C."/>
        </authorList>
    </citation>
    <scope>TISSUE SPECIFICITY</scope>
</reference>
<reference key="6">
    <citation type="journal article" date="2006" name="Cell">
        <title>Global, in vivo, and site-specific phosphorylation dynamics in signaling networks.</title>
        <authorList>
            <person name="Olsen J.V."/>
            <person name="Blagoev B."/>
            <person name="Gnad F."/>
            <person name="Macek B."/>
            <person name="Kumar C."/>
            <person name="Mortensen P."/>
            <person name="Mann M."/>
        </authorList>
    </citation>
    <scope>PHOSPHORYLATION [LARGE SCALE ANALYSIS] AT SER-17</scope>
    <scope>IDENTIFICATION BY MASS SPECTROMETRY [LARGE SCALE ANALYSIS]</scope>
    <source>
        <tissue>Cervix carcinoma</tissue>
    </source>
</reference>
<reference key="7">
    <citation type="journal article" date="2010" name="Sci. Signal.">
        <title>Quantitative phosphoproteomics reveals widespread full phosphorylation site occupancy during mitosis.</title>
        <authorList>
            <person name="Olsen J.V."/>
            <person name="Vermeulen M."/>
            <person name="Santamaria A."/>
            <person name="Kumar C."/>
            <person name="Miller M.L."/>
            <person name="Jensen L.J."/>
            <person name="Gnad F."/>
            <person name="Cox J."/>
            <person name="Jensen T.S."/>
            <person name="Nigg E.A."/>
            <person name="Brunak S."/>
            <person name="Mann M."/>
        </authorList>
    </citation>
    <scope>PHOSPHORYLATION [LARGE SCALE ANALYSIS] AT SER-17</scope>
    <scope>IDENTIFICATION BY MASS SPECTROMETRY [LARGE SCALE ANALYSIS]</scope>
    <source>
        <tissue>Cervix carcinoma</tissue>
    </source>
</reference>